<keyword id="KW-0963">Cytoplasm</keyword>
<keyword id="KW-0444">Lipid biosynthesis</keyword>
<keyword id="KW-0443">Lipid metabolism</keyword>
<keyword id="KW-0594">Phospholipid biosynthesis</keyword>
<keyword id="KW-1208">Phospholipid metabolism</keyword>
<keyword id="KW-0808">Transferase</keyword>
<comment type="function">
    <text evidence="1">Catalyzes the reversible formation of acyl-phosphate (acyl-PO(4)) from acyl-[acyl-carrier-protein] (acyl-ACP). This enzyme utilizes acyl-ACP as fatty acyl donor, but not acyl-CoA.</text>
</comment>
<comment type="catalytic activity">
    <reaction evidence="1">
        <text>a fatty acyl-[ACP] + phosphate = an acyl phosphate + holo-[ACP]</text>
        <dbReference type="Rhea" id="RHEA:42292"/>
        <dbReference type="Rhea" id="RHEA-COMP:9685"/>
        <dbReference type="Rhea" id="RHEA-COMP:14125"/>
        <dbReference type="ChEBI" id="CHEBI:43474"/>
        <dbReference type="ChEBI" id="CHEBI:59918"/>
        <dbReference type="ChEBI" id="CHEBI:64479"/>
        <dbReference type="ChEBI" id="CHEBI:138651"/>
        <dbReference type="EC" id="2.3.1.274"/>
    </reaction>
</comment>
<comment type="pathway">
    <text evidence="1">Lipid metabolism; phospholipid metabolism.</text>
</comment>
<comment type="subunit">
    <text evidence="1">Homodimer. Probably interacts with PlsY.</text>
</comment>
<comment type="subcellular location">
    <subcellularLocation>
        <location evidence="1">Cytoplasm</location>
    </subcellularLocation>
    <text evidence="1">Associated with the membrane possibly through PlsY.</text>
</comment>
<comment type="similarity">
    <text evidence="1">Belongs to the PlsX family.</text>
</comment>
<evidence type="ECO:0000255" key="1">
    <source>
        <dbReference type="HAMAP-Rule" id="MF_00019"/>
    </source>
</evidence>
<proteinExistence type="inferred from homology"/>
<sequence>MKIALDAMGGDYAPLETTKGALEAIKESNITVVLVGKEEELQKILKDYEYDKSRIEIVNAEEVIEMHEHPAFAVKEKENSSIVKAIKLLKERKVDGAVSAGNTGAVMSSALLYLGRIKGIKRPAISTLIPTLTEVPSIILDIGANVDCKKEYLEQFALMGKIYMEEVFNIKDPKIALLNIGEEEGKGNQLAQETYNLLKNNPIFNFIGNVEGKDLFKGIANVIVCDGFVGNIAIKTAEGVAETLFELLSSEIKSSLWSTILGMLLKPKFKNVKKKLDYSEFGGAPLLGVDGTVIISHGRSKAKAIKNALKLAEKVVKLEINRKILEGLSKITDRGD</sequence>
<feature type="chain" id="PRO_1000089901" description="Phosphate acyltransferase">
    <location>
        <begin position="1"/>
        <end position="336"/>
    </location>
</feature>
<gene>
    <name evidence="1" type="primary">plsX</name>
    <name type="ordered locus">DICTH_1343</name>
</gene>
<reference key="1">
    <citation type="journal article" date="2014" name="Genome Announc.">
        <title>Complete Genome Sequence of the Extreme Thermophile Dictyoglomus thermophilum H-6-12.</title>
        <authorList>
            <person name="Coil D.A."/>
            <person name="Badger J.H."/>
            <person name="Forberger H.C."/>
            <person name="Riggs F."/>
            <person name="Madupu R."/>
            <person name="Fedorova N."/>
            <person name="Ward N."/>
            <person name="Robb F.T."/>
            <person name="Eisen J.A."/>
        </authorList>
    </citation>
    <scope>NUCLEOTIDE SEQUENCE [LARGE SCALE GENOMIC DNA]</scope>
    <source>
        <strain>ATCC 35947 / DSM 3960 / H-6-12</strain>
    </source>
</reference>
<name>PLSX_DICT6</name>
<organism>
    <name type="scientific">Dictyoglomus thermophilum (strain ATCC 35947 / DSM 3960 / H-6-12)</name>
    <dbReference type="NCBI Taxonomy" id="309799"/>
    <lineage>
        <taxon>Bacteria</taxon>
        <taxon>Pseudomonadati</taxon>
        <taxon>Dictyoglomota</taxon>
        <taxon>Dictyoglomia</taxon>
        <taxon>Dictyoglomales</taxon>
        <taxon>Dictyoglomaceae</taxon>
        <taxon>Dictyoglomus</taxon>
    </lineage>
</organism>
<accession>B5YF54</accession>
<dbReference type="EC" id="2.3.1.274" evidence="1"/>
<dbReference type="EMBL" id="CP001146">
    <property type="protein sequence ID" value="ACI18358.1"/>
    <property type="molecule type" value="Genomic_DNA"/>
</dbReference>
<dbReference type="RefSeq" id="WP_012546990.1">
    <property type="nucleotide sequence ID" value="NC_011297.1"/>
</dbReference>
<dbReference type="SMR" id="B5YF54"/>
<dbReference type="STRING" id="309799.DICTH_1343"/>
<dbReference type="PaxDb" id="309799-DICTH_1343"/>
<dbReference type="KEGG" id="dth:DICTH_1343"/>
<dbReference type="eggNOG" id="COG0416">
    <property type="taxonomic scope" value="Bacteria"/>
</dbReference>
<dbReference type="HOGENOM" id="CLU_039379_1_1_0"/>
<dbReference type="OrthoDB" id="9806408at2"/>
<dbReference type="UniPathway" id="UPA00085"/>
<dbReference type="Proteomes" id="UP000001733">
    <property type="component" value="Chromosome"/>
</dbReference>
<dbReference type="GO" id="GO:0005737">
    <property type="term" value="C:cytoplasm"/>
    <property type="evidence" value="ECO:0007669"/>
    <property type="project" value="UniProtKB-SubCell"/>
</dbReference>
<dbReference type="GO" id="GO:0043811">
    <property type="term" value="F:phosphate:acyl-[acyl carrier protein] acyltransferase activity"/>
    <property type="evidence" value="ECO:0007669"/>
    <property type="project" value="UniProtKB-UniRule"/>
</dbReference>
<dbReference type="GO" id="GO:0006633">
    <property type="term" value="P:fatty acid biosynthetic process"/>
    <property type="evidence" value="ECO:0007669"/>
    <property type="project" value="UniProtKB-UniRule"/>
</dbReference>
<dbReference type="GO" id="GO:0008654">
    <property type="term" value="P:phospholipid biosynthetic process"/>
    <property type="evidence" value="ECO:0007669"/>
    <property type="project" value="UniProtKB-KW"/>
</dbReference>
<dbReference type="Gene3D" id="3.40.718.10">
    <property type="entry name" value="Isopropylmalate Dehydrogenase"/>
    <property type="match status" value="1"/>
</dbReference>
<dbReference type="HAMAP" id="MF_00019">
    <property type="entry name" value="PlsX"/>
    <property type="match status" value="1"/>
</dbReference>
<dbReference type="InterPro" id="IPR003664">
    <property type="entry name" value="FA_synthesis"/>
</dbReference>
<dbReference type="InterPro" id="IPR012281">
    <property type="entry name" value="Phospholipid_synth_PlsX-like"/>
</dbReference>
<dbReference type="NCBIfam" id="TIGR00182">
    <property type="entry name" value="plsX"/>
    <property type="match status" value="1"/>
</dbReference>
<dbReference type="PANTHER" id="PTHR30100">
    <property type="entry name" value="FATTY ACID/PHOSPHOLIPID SYNTHESIS PROTEIN PLSX"/>
    <property type="match status" value="1"/>
</dbReference>
<dbReference type="PANTHER" id="PTHR30100:SF1">
    <property type="entry name" value="PHOSPHATE ACYLTRANSFERASE"/>
    <property type="match status" value="1"/>
</dbReference>
<dbReference type="Pfam" id="PF02504">
    <property type="entry name" value="FA_synthesis"/>
    <property type="match status" value="1"/>
</dbReference>
<dbReference type="PIRSF" id="PIRSF002465">
    <property type="entry name" value="Phsphlp_syn_PlsX"/>
    <property type="match status" value="1"/>
</dbReference>
<dbReference type="SUPFAM" id="SSF53659">
    <property type="entry name" value="Isocitrate/Isopropylmalate dehydrogenase-like"/>
    <property type="match status" value="1"/>
</dbReference>
<protein>
    <recommendedName>
        <fullName evidence="1">Phosphate acyltransferase</fullName>
        <ecNumber evidence="1">2.3.1.274</ecNumber>
    </recommendedName>
    <alternativeName>
        <fullName evidence="1">Acyl-ACP phosphotransacylase</fullName>
    </alternativeName>
    <alternativeName>
        <fullName evidence="1">Acyl-[acyl-carrier-protein]--phosphate acyltransferase</fullName>
    </alternativeName>
    <alternativeName>
        <fullName evidence="1">Phosphate-acyl-ACP acyltransferase</fullName>
    </alternativeName>
</protein>